<sequence length="144" mass="15758">MCGCRASVPSTKHYSVNPAPTTRSPPAAAGMPKRIPIAKQLASIKALEKGSDLEKAFATAALVYNNSADPEGKLSKAETKSLLQTQFSRFIQGQENKPKYQEMISALDEEPEKKIDFEDFMISLVSLALLSDLLQEIKNVKSTK</sequence>
<reference evidence="5" key="1">
    <citation type="journal article" date="2005" name="Genome Res.">
        <title>Transcriptome analysis for the chicken based on 19,626 finished cDNA sequences and 485,337 expressed sequence tags.</title>
        <authorList>
            <person name="Hubbard S.J."/>
            <person name="Grafham D.V."/>
            <person name="Beattie K.J."/>
            <person name="Overton I.M."/>
            <person name="McLaren S.R."/>
            <person name="Croning M.D.R."/>
            <person name="Boardman P.E."/>
            <person name="Bonfield J.K."/>
            <person name="Burnside J."/>
            <person name="Davies R.M."/>
            <person name="Farrell E.R."/>
            <person name="Francis M.D."/>
            <person name="Griffiths-Jones S."/>
            <person name="Humphray S.J."/>
            <person name="Hyland C."/>
            <person name="Scott C.E."/>
            <person name="Tang H."/>
            <person name="Taylor R.G."/>
            <person name="Tickle C."/>
            <person name="Brown W.R.A."/>
            <person name="Birney E."/>
            <person name="Rogers J."/>
            <person name="Wilson S.A."/>
        </authorList>
    </citation>
    <scope>NUCLEOTIDE SEQUENCE [LARGE SCALE MRNA]</scope>
</reference>
<reference evidence="5 6" key="2">
    <citation type="journal article" date="2008" name="Mol. Biol. Cell">
        <title>Sentan: a novel specific component of the apical structure of vertebrate motile cilia.</title>
        <authorList>
            <person name="Kubo A."/>
            <person name="Yuba-Kubo A."/>
            <person name="Tsukita S."/>
            <person name="Tsukita S."/>
            <person name="Amagai M."/>
        </authorList>
    </citation>
    <scope>IDENTIFICATION</scope>
</reference>
<organism>
    <name type="scientific">Gallus gallus</name>
    <name type="common">Chicken</name>
    <dbReference type="NCBI Taxonomy" id="9031"/>
    <lineage>
        <taxon>Eukaryota</taxon>
        <taxon>Metazoa</taxon>
        <taxon>Chordata</taxon>
        <taxon>Craniata</taxon>
        <taxon>Vertebrata</taxon>
        <taxon>Euteleostomi</taxon>
        <taxon>Archelosauria</taxon>
        <taxon>Archosauria</taxon>
        <taxon>Dinosauria</taxon>
        <taxon>Saurischia</taxon>
        <taxon>Theropoda</taxon>
        <taxon>Coelurosauria</taxon>
        <taxon>Aves</taxon>
        <taxon>Neognathae</taxon>
        <taxon>Galloanserae</taxon>
        <taxon>Galliformes</taxon>
        <taxon>Phasianidae</taxon>
        <taxon>Phasianinae</taxon>
        <taxon>Gallus</taxon>
    </lineage>
</organism>
<dbReference type="EMBL" id="BX933188">
    <property type="status" value="NOT_ANNOTATED_CDS"/>
    <property type="molecule type" value="mRNA"/>
</dbReference>
<dbReference type="EMBL" id="BR000725">
    <property type="protein sequence ID" value="FAA00431.1"/>
    <property type="molecule type" value="mRNA"/>
</dbReference>
<dbReference type="RefSeq" id="NP_001136319.1">
    <property type="nucleotide sequence ID" value="NM_001142847.2"/>
</dbReference>
<dbReference type="SMR" id="B7FF67"/>
<dbReference type="STRING" id="9031.ENSGALP00000011789"/>
<dbReference type="PaxDb" id="9031-ENSGALP00000011789"/>
<dbReference type="Ensembl" id="ENSGALT00010051142.1">
    <property type="protein sequence ID" value="ENSGALP00010030333.1"/>
    <property type="gene ID" value="ENSGALG00010021119.1"/>
</dbReference>
<dbReference type="GeneID" id="416076"/>
<dbReference type="KEGG" id="gga:416076"/>
<dbReference type="CTD" id="132203"/>
<dbReference type="VEuPathDB" id="HostDB:geneid_416076"/>
<dbReference type="eggNOG" id="ENOG502S6AH">
    <property type="taxonomic scope" value="Eukaryota"/>
</dbReference>
<dbReference type="GeneTree" id="ENSGT00390000003322"/>
<dbReference type="HOGENOM" id="CLU_148109_0_0_1"/>
<dbReference type="InParanoid" id="B7FF67"/>
<dbReference type="OMA" id="MCGCRAS"/>
<dbReference type="OrthoDB" id="9362863at2759"/>
<dbReference type="PhylomeDB" id="B7FF67"/>
<dbReference type="TreeFam" id="TF335855"/>
<dbReference type="PRO" id="PR:B7FF67"/>
<dbReference type="Proteomes" id="UP000000539">
    <property type="component" value="Chromosome 12"/>
</dbReference>
<dbReference type="Bgee" id="ENSGALG00000007288">
    <property type="expression patterns" value="Expressed in ovary and 1 other cell type or tissue"/>
</dbReference>
<dbReference type="GO" id="GO:0005929">
    <property type="term" value="C:cilium"/>
    <property type="evidence" value="ECO:0007669"/>
    <property type="project" value="UniProtKB-SubCell"/>
</dbReference>
<dbReference type="GO" id="GO:0005509">
    <property type="term" value="F:calcium ion binding"/>
    <property type="evidence" value="ECO:0000318"/>
    <property type="project" value="GO_Central"/>
</dbReference>
<dbReference type="GO" id="GO:0048306">
    <property type="term" value="F:calcium-dependent protein binding"/>
    <property type="evidence" value="ECO:0000318"/>
    <property type="project" value="GO_Central"/>
</dbReference>
<dbReference type="GO" id="GO:0046914">
    <property type="term" value="F:transition metal ion binding"/>
    <property type="evidence" value="ECO:0007669"/>
    <property type="project" value="InterPro"/>
</dbReference>
<dbReference type="CDD" id="cd00213">
    <property type="entry name" value="S-100"/>
    <property type="match status" value="1"/>
</dbReference>
<dbReference type="Gene3D" id="1.10.238.10">
    <property type="entry name" value="EF-hand"/>
    <property type="match status" value="1"/>
</dbReference>
<dbReference type="InterPro" id="IPR011992">
    <property type="entry name" value="EF-hand-dom_pair"/>
</dbReference>
<dbReference type="InterPro" id="IPR034325">
    <property type="entry name" value="S-100_dom"/>
</dbReference>
<dbReference type="InterPro" id="IPR013787">
    <property type="entry name" value="S100_Ca-bd_sub"/>
</dbReference>
<dbReference type="SMART" id="SM01394">
    <property type="entry name" value="S_100"/>
    <property type="match status" value="1"/>
</dbReference>
<dbReference type="SUPFAM" id="SSF47473">
    <property type="entry name" value="EF-hand"/>
    <property type="match status" value="1"/>
</dbReference>
<name>SNTAN_CHICK</name>
<proteinExistence type="evidence at transcript level"/>
<keyword id="KW-0966">Cell projection</keyword>
<keyword id="KW-0969">Cilium</keyword>
<keyword id="KW-1185">Reference proteome</keyword>
<feature type="chain" id="PRO_0000376053" description="Sentan">
    <location>
        <begin position="1"/>
        <end position="144"/>
    </location>
</feature>
<feature type="region of interest" description="Disordered" evidence="3">
    <location>
        <begin position="1"/>
        <end position="31"/>
    </location>
</feature>
<feature type="compositionally biased region" description="Low complexity" evidence="3">
    <location>
        <begin position="18"/>
        <end position="29"/>
    </location>
</feature>
<comment type="function">
    <text evidence="1">May be a component of the linker structure that bridges the ciliary membrane and peripheral singlet microtubules.</text>
</comment>
<comment type="subcellular location">
    <subcellularLocation>
        <location evidence="1">Cell projection</location>
        <location evidence="1">Cilium</location>
    </subcellularLocation>
    <text evidence="1">Expressed exclusively at the cilium tip where it localizes between the cell membrane and peripheral A-subfibers.</text>
</comment>
<comment type="miscellaneous">
    <text evidence="4">'Sentan' means 'tip' in Japanese.</text>
</comment>
<comment type="similarity">
    <text evidence="2">Belongs to the S-100 family.</text>
</comment>
<gene>
    <name evidence="1" type="primary">SNTN</name>
    <name evidence="1" type="synonym">S100A1L</name>
</gene>
<accession>B7FF67</accession>
<protein>
    <recommendedName>
        <fullName evidence="6">Sentan</fullName>
    </recommendedName>
    <alternativeName>
        <fullName>Protein S100-A1-like</fullName>
    </alternativeName>
    <alternativeName>
        <fullName evidence="1">S100 calcium-binding protein A1-like</fullName>
    </alternativeName>
</protein>
<evidence type="ECO:0000250" key="1">
    <source>
        <dbReference type="UniProtKB" id="Q8C9X1"/>
    </source>
</evidence>
<evidence type="ECO:0000255" key="2"/>
<evidence type="ECO:0000256" key="3">
    <source>
        <dbReference type="SAM" id="MobiDB-lite"/>
    </source>
</evidence>
<evidence type="ECO:0000269" key="4">
    <source>
    </source>
</evidence>
<evidence type="ECO:0000305" key="5"/>
<evidence type="ECO:0000312" key="6">
    <source>
        <dbReference type="EMBL" id="FAA00431.1"/>
    </source>
</evidence>